<organism>
    <name type="scientific">Burkholderia pseudomallei (strain 1710b)</name>
    <dbReference type="NCBI Taxonomy" id="320372"/>
    <lineage>
        <taxon>Bacteria</taxon>
        <taxon>Pseudomonadati</taxon>
        <taxon>Pseudomonadota</taxon>
        <taxon>Betaproteobacteria</taxon>
        <taxon>Burkholderiales</taxon>
        <taxon>Burkholderiaceae</taxon>
        <taxon>Burkholderia</taxon>
        <taxon>pseudomallei group</taxon>
    </lineage>
</organism>
<sequence>MQQQKIRIRLKAFDYRLIDQSAAEIVDTAKRTGAIVRGPVPLPTRIQRFDILRSPHVNKTSRDQLEIRTHQRLMDIVDPTDKTVDALMKLDLPAGVDVEIKLQ</sequence>
<feature type="chain" id="PRO_0000237025" description="Small ribosomal subunit protein uS10">
    <location>
        <begin position="1"/>
        <end position="103"/>
    </location>
</feature>
<dbReference type="EMBL" id="CP000124">
    <property type="protein sequence ID" value="ABA48500.1"/>
    <property type="molecule type" value="Genomic_DNA"/>
</dbReference>
<dbReference type="RefSeq" id="WP_004199280.1">
    <property type="nucleotide sequence ID" value="NC_007434.1"/>
</dbReference>
<dbReference type="SMR" id="Q3JMR2"/>
<dbReference type="EnsemblBacteria" id="ABA48500">
    <property type="protein sequence ID" value="ABA48500"/>
    <property type="gene ID" value="BURPS1710b_3777"/>
</dbReference>
<dbReference type="GeneID" id="98107161"/>
<dbReference type="KEGG" id="bpm:BURPS1710b_3777"/>
<dbReference type="HOGENOM" id="CLU_122625_1_3_4"/>
<dbReference type="Proteomes" id="UP000002700">
    <property type="component" value="Chromosome I"/>
</dbReference>
<dbReference type="GO" id="GO:1990904">
    <property type="term" value="C:ribonucleoprotein complex"/>
    <property type="evidence" value="ECO:0007669"/>
    <property type="project" value="UniProtKB-KW"/>
</dbReference>
<dbReference type="GO" id="GO:0005840">
    <property type="term" value="C:ribosome"/>
    <property type="evidence" value="ECO:0007669"/>
    <property type="project" value="UniProtKB-KW"/>
</dbReference>
<dbReference type="GO" id="GO:0003735">
    <property type="term" value="F:structural constituent of ribosome"/>
    <property type="evidence" value="ECO:0007669"/>
    <property type="project" value="InterPro"/>
</dbReference>
<dbReference type="GO" id="GO:0000049">
    <property type="term" value="F:tRNA binding"/>
    <property type="evidence" value="ECO:0007669"/>
    <property type="project" value="UniProtKB-UniRule"/>
</dbReference>
<dbReference type="GO" id="GO:0006412">
    <property type="term" value="P:translation"/>
    <property type="evidence" value="ECO:0007669"/>
    <property type="project" value="UniProtKB-UniRule"/>
</dbReference>
<dbReference type="FunFam" id="3.30.70.600:FF:000001">
    <property type="entry name" value="30S ribosomal protein S10"/>
    <property type="match status" value="1"/>
</dbReference>
<dbReference type="Gene3D" id="3.30.70.600">
    <property type="entry name" value="Ribosomal protein S10 domain"/>
    <property type="match status" value="1"/>
</dbReference>
<dbReference type="HAMAP" id="MF_00508">
    <property type="entry name" value="Ribosomal_uS10"/>
    <property type="match status" value="1"/>
</dbReference>
<dbReference type="InterPro" id="IPR001848">
    <property type="entry name" value="Ribosomal_uS10"/>
</dbReference>
<dbReference type="InterPro" id="IPR018268">
    <property type="entry name" value="Ribosomal_uS10_CS"/>
</dbReference>
<dbReference type="InterPro" id="IPR027486">
    <property type="entry name" value="Ribosomal_uS10_dom"/>
</dbReference>
<dbReference type="InterPro" id="IPR036838">
    <property type="entry name" value="Ribosomal_uS10_dom_sf"/>
</dbReference>
<dbReference type="NCBIfam" id="NF001861">
    <property type="entry name" value="PRK00596.1"/>
    <property type="match status" value="1"/>
</dbReference>
<dbReference type="NCBIfam" id="TIGR01049">
    <property type="entry name" value="rpsJ_bact"/>
    <property type="match status" value="1"/>
</dbReference>
<dbReference type="PANTHER" id="PTHR11700">
    <property type="entry name" value="30S RIBOSOMAL PROTEIN S10 FAMILY MEMBER"/>
    <property type="match status" value="1"/>
</dbReference>
<dbReference type="Pfam" id="PF00338">
    <property type="entry name" value="Ribosomal_S10"/>
    <property type="match status" value="1"/>
</dbReference>
<dbReference type="PRINTS" id="PR00971">
    <property type="entry name" value="RIBOSOMALS10"/>
</dbReference>
<dbReference type="SMART" id="SM01403">
    <property type="entry name" value="Ribosomal_S10"/>
    <property type="match status" value="1"/>
</dbReference>
<dbReference type="SUPFAM" id="SSF54999">
    <property type="entry name" value="Ribosomal protein S10"/>
    <property type="match status" value="1"/>
</dbReference>
<dbReference type="PROSITE" id="PS00361">
    <property type="entry name" value="RIBOSOMAL_S10"/>
    <property type="match status" value="1"/>
</dbReference>
<accession>Q3JMR2</accession>
<protein>
    <recommendedName>
        <fullName evidence="1">Small ribosomal subunit protein uS10</fullName>
    </recommendedName>
    <alternativeName>
        <fullName evidence="2">30S ribosomal protein S10</fullName>
    </alternativeName>
</protein>
<evidence type="ECO:0000255" key="1">
    <source>
        <dbReference type="HAMAP-Rule" id="MF_00508"/>
    </source>
</evidence>
<evidence type="ECO:0000305" key="2"/>
<gene>
    <name evidence="1" type="primary">rpsJ</name>
    <name type="ordered locus">BURPS1710b_3777</name>
</gene>
<name>RS10_BURP1</name>
<keyword id="KW-0687">Ribonucleoprotein</keyword>
<keyword id="KW-0689">Ribosomal protein</keyword>
<proteinExistence type="inferred from homology"/>
<comment type="function">
    <text evidence="1">Involved in the binding of tRNA to the ribosomes.</text>
</comment>
<comment type="subunit">
    <text evidence="1">Part of the 30S ribosomal subunit.</text>
</comment>
<comment type="similarity">
    <text evidence="1">Belongs to the universal ribosomal protein uS10 family.</text>
</comment>
<reference key="1">
    <citation type="journal article" date="2010" name="Genome Biol. Evol.">
        <title>Continuing evolution of Burkholderia mallei through genome reduction and large-scale rearrangements.</title>
        <authorList>
            <person name="Losada L."/>
            <person name="Ronning C.M."/>
            <person name="DeShazer D."/>
            <person name="Woods D."/>
            <person name="Fedorova N."/>
            <person name="Kim H.S."/>
            <person name="Shabalina S.A."/>
            <person name="Pearson T.R."/>
            <person name="Brinkac L."/>
            <person name="Tan P."/>
            <person name="Nandi T."/>
            <person name="Crabtree J."/>
            <person name="Badger J."/>
            <person name="Beckstrom-Sternberg S."/>
            <person name="Saqib M."/>
            <person name="Schutzer S.E."/>
            <person name="Keim P."/>
            <person name="Nierman W.C."/>
        </authorList>
    </citation>
    <scope>NUCLEOTIDE SEQUENCE [LARGE SCALE GENOMIC DNA]</scope>
    <source>
        <strain>1710b</strain>
    </source>
</reference>